<comment type="function">
    <text evidence="1">Has antimicrobial activity.</text>
</comment>
<comment type="subcellular location">
    <subcellularLocation>
        <location evidence="3">Secreted</location>
    </subcellularLocation>
</comment>
<comment type="tissue specificity">
    <text evidence="3">Expressed by the skin glands.</text>
</comment>
<comment type="mass spectrometry"/>
<comment type="similarity">
    <text evidence="2">Belongs to the frog skin active peptide (FSAP) family. Dermaseptin subfamily.</text>
</comment>
<dbReference type="GO" id="GO:0005576">
    <property type="term" value="C:extracellular region"/>
    <property type="evidence" value="ECO:0007669"/>
    <property type="project" value="UniProtKB-SubCell"/>
</dbReference>
<dbReference type="GO" id="GO:0042742">
    <property type="term" value="P:defense response to bacterium"/>
    <property type="evidence" value="ECO:0007669"/>
    <property type="project" value="UniProtKB-KW"/>
</dbReference>
<dbReference type="InterPro" id="IPR022731">
    <property type="entry name" value="Dermaseptin_dom"/>
</dbReference>
<dbReference type="Pfam" id="PF12121">
    <property type="entry name" value="DD_K"/>
    <property type="match status" value="1"/>
</dbReference>
<sequence>ALWKDMLSGIGKLAGQAALGAVKTLV</sequence>
<organism>
    <name type="scientific">Phasmahyla jandaia</name>
    <name type="common">Jandaia leaf frog</name>
    <name type="synonym">Phyllomedusa jandaia</name>
    <dbReference type="NCBI Taxonomy" id="762504"/>
    <lineage>
        <taxon>Eukaryota</taxon>
        <taxon>Metazoa</taxon>
        <taxon>Chordata</taxon>
        <taxon>Craniata</taxon>
        <taxon>Vertebrata</taxon>
        <taxon>Euteleostomi</taxon>
        <taxon>Amphibia</taxon>
        <taxon>Batrachia</taxon>
        <taxon>Anura</taxon>
        <taxon>Neobatrachia</taxon>
        <taxon>Hyloidea</taxon>
        <taxon>Hylidae</taxon>
        <taxon>Phyllomedusinae</taxon>
        <taxon>Phasmahyla</taxon>
    </lineage>
</organism>
<protein>
    <recommendedName>
        <fullName evidence="4">Dermaseptin-J4</fullName>
        <shortName evidence="4">DRS-J4</shortName>
    </recommendedName>
</protein>
<name>DMS4_PHAJA</name>
<reference evidence="5" key="1">
    <citation type="journal article" date="2011" name="Toxicon">
        <title>Peptidomic dissection of the skin secretion of Phasmahyla jandaia (Bokermann and Sazima, 1978) (Anura, Hylidae, Phyllomedusinae).</title>
        <authorList>
            <person name="Rates B."/>
            <person name="Silva L.P."/>
            <person name="Ireno I.C."/>
            <person name="Leite F.S."/>
            <person name="Borges M.H."/>
            <person name="Bloch C. Jr."/>
            <person name="De Lima M.E."/>
            <person name="Pimenta A.M."/>
        </authorList>
    </citation>
    <scope>PROTEIN SEQUENCE</scope>
    <scope>SUBCELLULAR LOCATION</scope>
    <scope>TISSUE SPECIFICITY</scope>
    <scope>MASS SPECTROMETRY</scope>
    <scope>AMIDATION AT VAL-26</scope>
    <source>
        <tissue evidence="3">Skin secretion</tissue>
    </source>
</reference>
<proteinExistence type="evidence at protein level"/>
<evidence type="ECO:0000250" key="1">
    <source>
        <dbReference type="UniProtKB" id="P84926"/>
    </source>
</evidence>
<evidence type="ECO:0000255" key="2"/>
<evidence type="ECO:0000269" key="3">
    <source>
    </source>
</evidence>
<evidence type="ECO:0000303" key="4">
    <source>
    </source>
</evidence>
<evidence type="ECO:0000305" key="5"/>
<keyword id="KW-0027">Amidation</keyword>
<keyword id="KW-0878">Amphibian defense peptide</keyword>
<keyword id="KW-0044">Antibiotic</keyword>
<keyword id="KW-0929">Antimicrobial</keyword>
<keyword id="KW-0903">Direct protein sequencing</keyword>
<keyword id="KW-0964">Secreted</keyword>
<feature type="peptide" id="PRO_0000404613" description="Dermaseptin-J4" evidence="3">
    <location>
        <begin position="1"/>
        <end position="26"/>
    </location>
</feature>
<feature type="modified residue" description="Valine amide" evidence="3">
    <location>
        <position position="26"/>
    </location>
</feature>
<feature type="unsure residue" description="L or I" evidence="3">
    <location>
        <position position="2"/>
    </location>
</feature>
<feature type="unsure residue" description="K or Q" evidence="3">
    <location>
        <position position="4"/>
    </location>
</feature>
<feature type="unsure residue" description="L or I" evidence="3">
    <location>
        <position position="7"/>
    </location>
</feature>
<feature type="unsure residue" description="I or L" evidence="3">
    <location>
        <position position="10"/>
    </location>
</feature>
<feature type="unsure residue" description="K or Q" evidence="3">
    <location>
        <position position="12"/>
    </location>
</feature>
<feature type="unsure residue" description="L or I" evidence="3">
    <location>
        <position position="13"/>
    </location>
</feature>
<feature type="unsure residue" description="Q or K" evidence="3">
    <location>
        <position position="16"/>
    </location>
</feature>
<feature type="unsure residue" description="L or I" evidence="3">
    <location>
        <position position="19"/>
    </location>
</feature>
<feature type="unsure residue" description="K or Q" evidence="3">
    <location>
        <position position="23"/>
    </location>
</feature>
<feature type="unsure residue" description="L or I" evidence="3">
    <location>
        <position position="25"/>
    </location>
</feature>
<accession>P86638</accession>